<dbReference type="EC" id="2.7.1.50" evidence="1"/>
<dbReference type="EMBL" id="CP000724">
    <property type="protein sequence ID" value="ABR47454.1"/>
    <property type="molecule type" value="Genomic_DNA"/>
</dbReference>
<dbReference type="RefSeq" id="WP_012062494.1">
    <property type="nucleotide sequence ID" value="NC_009633.1"/>
</dbReference>
<dbReference type="SMR" id="A6TMN6"/>
<dbReference type="STRING" id="293826.Amet_1248"/>
<dbReference type="KEGG" id="amt:Amet_1248"/>
<dbReference type="eggNOG" id="COG2145">
    <property type="taxonomic scope" value="Bacteria"/>
</dbReference>
<dbReference type="HOGENOM" id="CLU_019943_0_0_9"/>
<dbReference type="OrthoDB" id="9778146at2"/>
<dbReference type="UniPathway" id="UPA00060">
    <property type="reaction ID" value="UER00139"/>
</dbReference>
<dbReference type="Proteomes" id="UP000001572">
    <property type="component" value="Chromosome"/>
</dbReference>
<dbReference type="GO" id="GO:0005524">
    <property type="term" value="F:ATP binding"/>
    <property type="evidence" value="ECO:0007669"/>
    <property type="project" value="UniProtKB-UniRule"/>
</dbReference>
<dbReference type="GO" id="GO:0004417">
    <property type="term" value="F:hydroxyethylthiazole kinase activity"/>
    <property type="evidence" value="ECO:0007669"/>
    <property type="project" value="UniProtKB-UniRule"/>
</dbReference>
<dbReference type="GO" id="GO:0000287">
    <property type="term" value="F:magnesium ion binding"/>
    <property type="evidence" value="ECO:0007669"/>
    <property type="project" value="UniProtKB-UniRule"/>
</dbReference>
<dbReference type="GO" id="GO:0009228">
    <property type="term" value="P:thiamine biosynthetic process"/>
    <property type="evidence" value="ECO:0007669"/>
    <property type="project" value="UniProtKB-KW"/>
</dbReference>
<dbReference type="GO" id="GO:0009229">
    <property type="term" value="P:thiamine diphosphate biosynthetic process"/>
    <property type="evidence" value="ECO:0007669"/>
    <property type="project" value="UniProtKB-UniRule"/>
</dbReference>
<dbReference type="CDD" id="cd01170">
    <property type="entry name" value="THZ_kinase"/>
    <property type="match status" value="1"/>
</dbReference>
<dbReference type="Gene3D" id="3.40.1190.20">
    <property type="match status" value="1"/>
</dbReference>
<dbReference type="HAMAP" id="MF_00228">
    <property type="entry name" value="Thz_kinase"/>
    <property type="match status" value="1"/>
</dbReference>
<dbReference type="InterPro" id="IPR000417">
    <property type="entry name" value="Hyethyz_kinase"/>
</dbReference>
<dbReference type="InterPro" id="IPR029056">
    <property type="entry name" value="Ribokinase-like"/>
</dbReference>
<dbReference type="NCBIfam" id="NF006830">
    <property type="entry name" value="PRK09355.1"/>
    <property type="match status" value="1"/>
</dbReference>
<dbReference type="NCBIfam" id="TIGR00694">
    <property type="entry name" value="thiM"/>
    <property type="match status" value="1"/>
</dbReference>
<dbReference type="Pfam" id="PF02110">
    <property type="entry name" value="HK"/>
    <property type="match status" value="1"/>
</dbReference>
<dbReference type="PIRSF" id="PIRSF000513">
    <property type="entry name" value="Thz_kinase"/>
    <property type="match status" value="1"/>
</dbReference>
<dbReference type="PRINTS" id="PR01099">
    <property type="entry name" value="HYETHTZKNASE"/>
</dbReference>
<dbReference type="SUPFAM" id="SSF53613">
    <property type="entry name" value="Ribokinase-like"/>
    <property type="match status" value="1"/>
</dbReference>
<name>THIM_ALKMQ</name>
<proteinExistence type="inferred from homology"/>
<evidence type="ECO:0000255" key="1">
    <source>
        <dbReference type="HAMAP-Rule" id="MF_00228"/>
    </source>
</evidence>
<sequence length="272" mass="28983">MLELEESSKIIEKIKYNKPLIHHITNYVSVNDCANIVLALGGSPIMADDPKEVVEVVSKASALVINIGTLNDKRVQSMLLAGRKANELGIPVILDPVGVGASTFRKDTVNQLLKNIDFTVIRGNASEMQVLMNMNYSVAGVDSMDFGGNTPKMIRTLAQKYKTTVAITGATDSICDGTTLISVSNGHSLLSQVTGTGCMTTSLIATCLAVTDQALLAALAGVLIMDLAGEGAYASLKAHESIGTFKVRIFDHIHQLTEQTILEGGSLDVSYR</sequence>
<reference key="1">
    <citation type="journal article" date="2016" name="Genome Announc.">
        <title>Complete genome sequence of Alkaliphilus metalliredigens strain QYMF, an alkaliphilic and metal-reducing bacterium isolated from borax-contaminated leachate ponds.</title>
        <authorList>
            <person name="Hwang C."/>
            <person name="Copeland A."/>
            <person name="Lucas S."/>
            <person name="Lapidus A."/>
            <person name="Barry K."/>
            <person name="Detter J.C."/>
            <person name="Glavina Del Rio T."/>
            <person name="Hammon N."/>
            <person name="Israni S."/>
            <person name="Dalin E."/>
            <person name="Tice H."/>
            <person name="Pitluck S."/>
            <person name="Chertkov O."/>
            <person name="Brettin T."/>
            <person name="Bruce D."/>
            <person name="Han C."/>
            <person name="Schmutz J."/>
            <person name="Larimer F."/>
            <person name="Land M.L."/>
            <person name="Hauser L."/>
            <person name="Kyrpides N."/>
            <person name="Mikhailova N."/>
            <person name="Ye Q."/>
            <person name="Zhou J."/>
            <person name="Richardson P."/>
            <person name="Fields M.W."/>
        </authorList>
    </citation>
    <scope>NUCLEOTIDE SEQUENCE [LARGE SCALE GENOMIC DNA]</scope>
    <source>
        <strain>QYMF</strain>
    </source>
</reference>
<accession>A6TMN6</accession>
<keyword id="KW-0067">ATP-binding</keyword>
<keyword id="KW-0418">Kinase</keyword>
<keyword id="KW-0460">Magnesium</keyword>
<keyword id="KW-0479">Metal-binding</keyword>
<keyword id="KW-0547">Nucleotide-binding</keyword>
<keyword id="KW-1185">Reference proteome</keyword>
<keyword id="KW-0784">Thiamine biosynthesis</keyword>
<keyword id="KW-0808">Transferase</keyword>
<comment type="function">
    <text evidence="1">Catalyzes the phosphorylation of the hydroxyl group of 4-methyl-5-beta-hydroxyethylthiazole (THZ).</text>
</comment>
<comment type="catalytic activity">
    <reaction evidence="1">
        <text>5-(2-hydroxyethyl)-4-methylthiazole + ATP = 4-methyl-5-(2-phosphooxyethyl)-thiazole + ADP + H(+)</text>
        <dbReference type="Rhea" id="RHEA:24212"/>
        <dbReference type="ChEBI" id="CHEBI:15378"/>
        <dbReference type="ChEBI" id="CHEBI:17957"/>
        <dbReference type="ChEBI" id="CHEBI:30616"/>
        <dbReference type="ChEBI" id="CHEBI:58296"/>
        <dbReference type="ChEBI" id="CHEBI:456216"/>
        <dbReference type="EC" id="2.7.1.50"/>
    </reaction>
</comment>
<comment type="cofactor">
    <cofactor evidence="1">
        <name>Mg(2+)</name>
        <dbReference type="ChEBI" id="CHEBI:18420"/>
    </cofactor>
</comment>
<comment type="pathway">
    <text evidence="1">Cofactor biosynthesis; thiamine diphosphate biosynthesis; 4-methyl-5-(2-phosphoethyl)-thiazole from 5-(2-hydroxyethyl)-4-methylthiazole: step 1/1.</text>
</comment>
<comment type="similarity">
    <text evidence="1">Belongs to the Thz kinase family.</text>
</comment>
<protein>
    <recommendedName>
        <fullName evidence="1">Hydroxyethylthiazole kinase</fullName>
        <ecNumber evidence="1">2.7.1.50</ecNumber>
    </recommendedName>
    <alternativeName>
        <fullName evidence="1">4-methyl-5-beta-hydroxyethylthiazole kinase</fullName>
        <shortName evidence="1">TH kinase</shortName>
        <shortName evidence="1">Thz kinase</shortName>
    </alternativeName>
</protein>
<gene>
    <name evidence="1" type="primary">thiM</name>
    <name type="ordered locus">Amet_1248</name>
</gene>
<organism>
    <name type="scientific">Alkaliphilus metalliredigens (strain QYMF)</name>
    <dbReference type="NCBI Taxonomy" id="293826"/>
    <lineage>
        <taxon>Bacteria</taxon>
        <taxon>Bacillati</taxon>
        <taxon>Bacillota</taxon>
        <taxon>Clostridia</taxon>
        <taxon>Peptostreptococcales</taxon>
        <taxon>Natronincolaceae</taxon>
        <taxon>Alkaliphilus</taxon>
    </lineage>
</organism>
<feature type="chain" id="PRO_1000058756" description="Hydroxyethylthiazole kinase">
    <location>
        <begin position="1"/>
        <end position="272"/>
    </location>
</feature>
<feature type="binding site" evidence="1">
    <location>
        <position position="46"/>
    </location>
    <ligand>
        <name>substrate</name>
    </ligand>
</feature>
<feature type="binding site" evidence="1">
    <location>
        <position position="122"/>
    </location>
    <ligand>
        <name>ATP</name>
        <dbReference type="ChEBI" id="CHEBI:30616"/>
    </ligand>
</feature>
<feature type="binding site" evidence="1">
    <location>
        <position position="168"/>
    </location>
    <ligand>
        <name>ATP</name>
        <dbReference type="ChEBI" id="CHEBI:30616"/>
    </ligand>
</feature>
<feature type="binding site" evidence="1">
    <location>
        <position position="195"/>
    </location>
    <ligand>
        <name>substrate</name>
    </ligand>
</feature>